<protein>
    <recommendedName>
        <fullName>Defensin-like peptide</fullName>
    </recommendedName>
</protein>
<reference evidence="3" key="1">
    <citation type="journal article" date="2007" name="Peptides">
        <title>Purification and characterization of eight peptides from Galleria mellonella immune hemolymph.</title>
        <authorList>
            <person name="Cytrynska M."/>
            <person name="Mak P."/>
            <person name="Zdybicka-Barabas A."/>
            <person name="Suder P."/>
            <person name="Jakubowicz T."/>
        </authorList>
    </citation>
    <scope>PROTEIN SEQUENCE</scope>
    <scope>FUNCTION</scope>
    <scope>SUBCELLULAR LOCATION</scope>
    <scope>TISSUE SPECIFICITY</scope>
    <scope>INDUCTION</scope>
    <scope>MASS SPECTROMETRY</scope>
    <scope>DISULFIDE BONDS</scope>
    <source>
        <tissue evidence="2">Larval hemolymph</tissue>
    </source>
</reference>
<accession>P85215</accession>
<evidence type="ECO:0000255" key="1">
    <source>
        <dbReference type="PROSITE-ProRule" id="PRU00710"/>
    </source>
</evidence>
<evidence type="ECO:0000269" key="2">
    <source>
    </source>
</evidence>
<evidence type="ECO:0000305" key="3"/>
<feature type="chain" id="PRO_0000298769" description="Defensin-like peptide">
    <location>
        <begin position="1"/>
        <end position="44"/>
    </location>
</feature>
<feature type="disulfide bond" evidence="1 2">
    <location>
        <begin position="7"/>
        <end position="32"/>
    </location>
</feature>
<feature type="disulfide bond" evidence="1 2">
    <location>
        <begin position="18"/>
        <end position="40"/>
    </location>
</feature>
<feature type="disulfide bond" evidence="1 2">
    <location>
        <begin position="22"/>
        <end position="42"/>
    </location>
</feature>
<keyword id="KW-0929">Antimicrobial</keyword>
<keyword id="KW-0211">Defensin</keyword>
<keyword id="KW-0903">Direct protein sequencing</keyword>
<keyword id="KW-1015">Disulfide bond</keyword>
<keyword id="KW-0295">Fungicide</keyword>
<keyword id="KW-0391">Immunity</keyword>
<keyword id="KW-0399">Innate immunity</keyword>
<keyword id="KW-1185">Reference proteome</keyword>
<keyword id="KW-0964">Secreted</keyword>
<proteinExistence type="evidence at protein level"/>
<comment type="function">
    <text evidence="2">Has antibacterial activity against the Gram-positive bacterium S.lutea (MIC=1.9 uM). Lacks antibacterial activity against the Gram-positive bacteria L.monocytogenes and M.luteus, and the Gram-negative bacteria E.coli D31, E.coli ATCC 25922, and S.typhimurium. Has antifungal activity against A.niger (MIC=2.9 uM), C.albicans (MIC=2.9 uM), C.fructus (MIC=2.9 uM), C.wickerhamii (MIC=2.9 uM), P.pastoris (MIC=2.9 uM), P.stiptis (MIC=2.9 uM), P.tannophilus (MIC=2.9 uM), T.harzianum (MIC=2.9 uM), and Z.marxianus (MIC=2.9 uM), but lacks antifungal activity against C.albidus, F.oxysporum, and S.cerevisiae.</text>
</comment>
<comment type="subcellular location">
    <subcellularLocation>
        <location evidence="1 2">Secreted</location>
    </subcellularLocation>
</comment>
<comment type="tissue specificity">
    <text evidence="2">Hemolymph.</text>
</comment>
<comment type="induction">
    <text evidence="2">By bacterial infection.</text>
</comment>
<comment type="mass spectrometry"/>
<comment type="similarity">
    <text evidence="1">Belongs to the invertebrate defensin family. Type 2 subfamily.</text>
</comment>
<name>DEF2_GALME</name>
<organism>
    <name type="scientific">Galleria mellonella</name>
    <name type="common">Greater wax moth</name>
    <dbReference type="NCBI Taxonomy" id="7137"/>
    <lineage>
        <taxon>Eukaryota</taxon>
        <taxon>Metazoa</taxon>
        <taxon>Ecdysozoa</taxon>
        <taxon>Arthropoda</taxon>
        <taxon>Hexapoda</taxon>
        <taxon>Insecta</taxon>
        <taxon>Pterygota</taxon>
        <taxon>Neoptera</taxon>
        <taxon>Endopterygota</taxon>
        <taxon>Lepidoptera</taxon>
        <taxon>Glossata</taxon>
        <taxon>Ditrysia</taxon>
        <taxon>Pyraloidea</taxon>
        <taxon>Pyralidae</taxon>
        <taxon>Galleriinae</taxon>
        <taxon>Galleria</taxon>
    </lineage>
</organism>
<sequence>DKLIGSCVWGATNYTSDCNAECKRRGYKGGHCGSFWNVNCWCEE</sequence>
<dbReference type="SMR" id="P85215"/>
<dbReference type="EnsemblMetazoa" id="XM_026909422.2">
    <property type="protein sequence ID" value="XP_026765223.1"/>
    <property type="gene ID" value="LOC113523442"/>
</dbReference>
<dbReference type="InParanoid" id="P85215"/>
<dbReference type="Proteomes" id="UP000504614">
    <property type="component" value="Unplaced"/>
</dbReference>
<dbReference type="GO" id="GO:0005615">
    <property type="term" value="C:extracellular space"/>
    <property type="evidence" value="ECO:0000314"/>
    <property type="project" value="UniProtKB"/>
</dbReference>
<dbReference type="GO" id="GO:0050832">
    <property type="term" value="P:defense response to fungus"/>
    <property type="evidence" value="ECO:0000314"/>
    <property type="project" value="UniProtKB"/>
</dbReference>
<dbReference type="GO" id="GO:0050830">
    <property type="term" value="P:defense response to Gram-positive bacterium"/>
    <property type="evidence" value="ECO:0000314"/>
    <property type="project" value="UniProtKB"/>
</dbReference>
<dbReference type="GO" id="GO:0045087">
    <property type="term" value="P:innate immune response"/>
    <property type="evidence" value="ECO:0000314"/>
    <property type="project" value="UniProtKB"/>
</dbReference>
<dbReference type="GO" id="GO:0031640">
    <property type="term" value="P:killing of cells of another organism"/>
    <property type="evidence" value="ECO:0007669"/>
    <property type="project" value="UniProtKB-KW"/>
</dbReference>
<dbReference type="FunFam" id="3.30.30.10:FF:000012">
    <property type="entry name" value="Defensin ARD1"/>
    <property type="match status" value="1"/>
</dbReference>
<dbReference type="Gene3D" id="3.30.30.10">
    <property type="entry name" value="Knottin, scorpion toxin-like"/>
    <property type="match status" value="1"/>
</dbReference>
<dbReference type="InterPro" id="IPR001542">
    <property type="entry name" value="Defensin_invertebrate/fungal"/>
</dbReference>
<dbReference type="InterPro" id="IPR036574">
    <property type="entry name" value="Scorpion_toxin-like_sf"/>
</dbReference>
<dbReference type="Pfam" id="PF01097">
    <property type="entry name" value="Defensin_2"/>
    <property type="match status" value="1"/>
</dbReference>
<dbReference type="SUPFAM" id="SSF57095">
    <property type="entry name" value="Scorpion toxin-like"/>
    <property type="match status" value="1"/>
</dbReference>
<dbReference type="PROSITE" id="PS51378">
    <property type="entry name" value="INVERT_DEFENSINS"/>
    <property type="match status" value="1"/>
</dbReference>